<sequence>MFLMNMLCLIIPILLAMAFLTLVERKILGYMQLRKGPNIVGPYGLLQPIADAIKLFIKEPLRPLTSSKLMFTLAPMLAFSLALSMWIPMPMPHPLIHLNLGVLFILALSSLAVYSILWSGWASNSKYALIGALRAVAQTISYEVTLAIILLSTMMMNGSFTLSTLTTTQEHMWLIFPLWPLAMMWFISTLAETNRAPFDLTEGESELVSGFNVEYAAGPFALFFMAEYTNIIMMKALTTTLFLGALHNPLLPELFTANFVTKTLALTMAFLWIRASYPRFRYDQLMHLLWKSFLPLTLALCMLHVSLPTVSAGIPPHM</sequence>
<comment type="function">
    <text evidence="1">Core subunit of the mitochondrial membrane respiratory chain NADH dehydrogenase (Complex I) that is believed to belong to the minimal assembly required for catalysis. Complex I functions in the transfer of electrons from NADH to the respiratory chain. The immediate electron acceptor for the enzyme is believed to be ubiquinone (By similarity).</text>
</comment>
<comment type="catalytic activity">
    <reaction>
        <text>a ubiquinone + NADH + 5 H(+)(in) = a ubiquinol + NAD(+) + 4 H(+)(out)</text>
        <dbReference type="Rhea" id="RHEA:29091"/>
        <dbReference type="Rhea" id="RHEA-COMP:9565"/>
        <dbReference type="Rhea" id="RHEA-COMP:9566"/>
        <dbReference type="ChEBI" id="CHEBI:15378"/>
        <dbReference type="ChEBI" id="CHEBI:16389"/>
        <dbReference type="ChEBI" id="CHEBI:17976"/>
        <dbReference type="ChEBI" id="CHEBI:57540"/>
        <dbReference type="ChEBI" id="CHEBI:57945"/>
        <dbReference type="EC" id="7.1.1.2"/>
    </reaction>
</comment>
<comment type="subcellular location">
    <subcellularLocation>
        <location evidence="1">Mitochondrion inner membrane</location>
        <topology evidence="1">Multi-pass membrane protein</topology>
    </subcellularLocation>
</comment>
<comment type="similarity">
    <text evidence="3">Belongs to the complex I subunit 1 family.</text>
</comment>
<protein>
    <recommendedName>
        <fullName>NADH-ubiquinone oxidoreductase chain 1</fullName>
        <ecNumber>7.1.1.2</ecNumber>
    </recommendedName>
    <alternativeName>
        <fullName>NADH dehydrogenase subunit 1</fullName>
    </alternativeName>
</protein>
<keyword id="KW-0249">Electron transport</keyword>
<keyword id="KW-0472">Membrane</keyword>
<keyword id="KW-0496">Mitochondrion</keyword>
<keyword id="KW-0999">Mitochondrion inner membrane</keyword>
<keyword id="KW-0520">NAD</keyword>
<keyword id="KW-0679">Respiratory chain</keyword>
<keyword id="KW-1278">Translocase</keyword>
<keyword id="KW-0812">Transmembrane</keyword>
<keyword id="KW-1133">Transmembrane helix</keyword>
<keyword id="KW-0813">Transport</keyword>
<keyword id="KW-0830">Ubiquinone</keyword>
<name>NU1M_TOLMA</name>
<gene>
    <name type="primary">MT-ND1</name>
    <name type="synonym">MTND1</name>
    <name type="synonym">NADH1</name>
    <name type="synonym">ND1</name>
</gene>
<accession>Q70Y23</accession>
<geneLocation type="mitochondrion"/>
<reference key="1">
    <citation type="journal article" date="2003" name="Mol. Phylogenet. Evol.">
        <title>Molecular systematics of armadillos (Xenarthra, Dasypodidae): contribution of maximum likelihood and Bayesian analyses of mitochondrial and nuclear genes.</title>
        <authorList>
            <person name="Delsuc F."/>
            <person name="Stanhope M.J."/>
            <person name="Douzery E.J."/>
        </authorList>
    </citation>
    <scope>NUCLEOTIDE SEQUENCE [GENOMIC DNA]</scope>
</reference>
<proteinExistence type="inferred from homology"/>
<organism>
    <name type="scientific">Tolypeutes matacus</name>
    <name type="common">Southern three-banded armadillo</name>
    <dbReference type="NCBI Taxonomy" id="183749"/>
    <lineage>
        <taxon>Eukaryota</taxon>
        <taxon>Metazoa</taxon>
        <taxon>Chordata</taxon>
        <taxon>Craniata</taxon>
        <taxon>Vertebrata</taxon>
        <taxon>Euteleostomi</taxon>
        <taxon>Mammalia</taxon>
        <taxon>Eutheria</taxon>
        <taxon>Xenarthra</taxon>
        <taxon>Cingulata</taxon>
        <taxon>Chlamyphoridae</taxon>
        <taxon>Tolypeutes</taxon>
    </lineage>
</organism>
<dbReference type="EC" id="7.1.1.2"/>
<dbReference type="EMBL" id="AJ505837">
    <property type="protein sequence ID" value="CAD44384.1"/>
    <property type="molecule type" value="Genomic_DNA"/>
</dbReference>
<dbReference type="SMR" id="Q70Y23"/>
<dbReference type="GO" id="GO:0005743">
    <property type="term" value="C:mitochondrial inner membrane"/>
    <property type="evidence" value="ECO:0007669"/>
    <property type="project" value="UniProtKB-SubCell"/>
</dbReference>
<dbReference type="GO" id="GO:0008137">
    <property type="term" value="F:NADH dehydrogenase (ubiquinone) activity"/>
    <property type="evidence" value="ECO:0007669"/>
    <property type="project" value="UniProtKB-EC"/>
</dbReference>
<dbReference type="GO" id="GO:0009060">
    <property type="term" value="P:aerobic respiration"/>
    <property type="evidence" value="ECO:0007669"/>
    <property type="project" value="TreeGrafter"/>
</dbReference>
<dbReference type="HAMAP" id="MF_01350">
    <property type="entry name" value="NDH1_NuoH"/>
    <property type="match status" value="1"/>
</dbReference>
<dbReference type="InterPro" id="IPR001694">
    <property type="entry name" value="NADH_UbQ_OxRdtase_su1/FPO"/>
</dbReference>
<dbReference type="InterPro" id="IPR018086">
    <property type="entry name" value="NADH_UbQ_OxRdtase_su1_CS"/>
</dbReference>
<dbReference type="PANTHER" id="PTHR11432">
    <property type="entry name" value="NADH DEHYDROGENASE SUBUNIT 1"/>
    <property type="match status" value="1"/>
</dbReference>
<dbReference type="PANTHER" id="PTHR11432:SF3">
    <property type="entry name" value="NADH-UBIQUINONE OXIDOREDUCTASE CHAIN 1"/>
    <property type="match status" value="1"/>
</dbReference>
<dbReference type="Pfam" id="PF00146">
    <property type="entry name" value="NADHdh"/>
    <property type="match status" value="1"/>
</dbReference>
<dbReference type="PROSITE" id="PS00667">
    <property type="entry name" value="COMPLEX1_ND1_1"/>
    <property type="match status" value="1"/>
</dbReference>
<dbReference type="PROSITE" id="PS00668">
    <property type="entry name" value="COMPLEX1_ND1_2"/>
    <property type="match status" value="1"/>
</dbReference>
<evidence type="ECO:0000250" key="1"/>
<evidence type="ECO:0000255" key="2"/>
<evidence type="ECO:0000305" key="3"/>
<feature type="chain" id="PRO_0000117490" description="NADH-ubiquinone oxidoreductase chain 1">
    <location>
        <begin position="1"/>
        <end position="318"/>
    </location>
</feature>
<feature type="transmembrane region" description="Helical" evidence="2">
    <location>
        <begin position="2"/>
        <end position="22"/>
    </location>
</feature>
<feature type="transmembrane region" description="Helical" evidence="2">
    <location>
        <begin position="37"/>
        <end position="57"/>
    </location>
</feature>
<feature type="transmembrane region" description="Helical" evidence="2">
    <location>
        <begin position="69"/>
        <end position="89"/>
    </location>
</feature>
<feature type="transmembrane region" description="Helical" evidence="2">
    <location>
        <begin position="100"/>
        <end position="120"/>
    </location>
</feature>
<feature type="transmembrane region" description="Helical" evidence="2">
    <location>
        <begin position="136"/>
        <end position="156"/>
    </location>
</feature>
<feature type="transmembrane region" description="Helical" evidence="2">
    <location>
        <begin position="171"/>
        <end position="191"/>
    </location>
</feature>
<feature type="transmembrane region" description="Helical" evidence="2">
    <location>
        <begin position="206"/>
        <end position="226"/>
    </location>
</feature>
<feature type="transmembrane region" description="Helical" evidence="2">
    <location>
        <begin position="253"/>
        <end position="273"/>
    </location>
</feature>
<feature type="transmembrane region" description="Helical" evidence="2">
    <location>
        <begin position="294"/>
        <end position="314"/>
    </location>
</feature>